<comment type="subcellular location">
    <subcellularLocation>
        <location evidence="2">Cell membrane</location>
        <topology evidence="2">Multi-pass membrane protein</topology>
    </subcellularLocation>
</comment>
<comment type="similarity">
    <text evidence="2">Belongs to the DedA family.</text>
</comment>
<dbReference type="EMBL" id="AL123456">
    <property type="protein sequence ID" value="CCP43094.1"/>
    <property type="molecule type" value="Genomic_DNA"/>
</dbReference>
<dbReference type="PIR" id="E70576">
    <property type="entry name" value="E70576"/>
</dbReference>
<dbReference type="RefSeq" id="NP_214878.1">
    <property type="nucleotide sequence ID" value="NC_000962.3"/>
</dbReference>
<dbReference type="RefSeq" id="WP_003401857.1">
    <property type="nucleotide sequence ID" value="NZ_NVQJ01000002.1"/>
</dbReference>
<dbReference type="FunCoup" id="P9WP09">
    <property type="interactions" value="13"/>
</dbReference>
<dbReference type="STRING" id="83332.Rv0364"/>
<dbReference type="PaxDb" id="83332-Rv0364"/>
<dbReference type="DNASU" id="886473"/>
<dbReference type="GeneID" id="886473"/>
<dbReference type="KEGG" id="mtu:Rv0364"/>
<dbReference type="KEGG" id="mtv:RVBD_0364"/>
<dbReference type="TubercuList" id="Rv0364"/>
<dbReference type="eggNOG" id="COG0586">
    <property type="taxonomic scope" value="Bacteria"/>
</dbReference>
<dbReference type="InParanoid" id="P9WP09"/>
<dbReference type="OrthoDB" id="9813426at2"/>
<dbReference type="PhylomeDB" id="P9WP09"/>
<dbReference type="Proteomes" id="UP000001584">
    <property type="component" value="Chromosome"/>
</dbReference>
<dbReference type="GO" id="GO:0005886">
    <property type="term" value="C:plasma membrane"/>
    <property type="evidence" value="ECO:0007669"/>
    <property type="project" value="UniProtKB-SubCell"/>
</dbReference>
<dbReference type="InterPro" id="IPR032818">
    <property type="entry name" value="DedA-like"/>
</dbReference>
<dbReference type="InterPro" id="IPR032816">
    <property type="entry name" value="VTT_dom"/>
</dbReference>
<dbReference type="PANTHER" id="PTHR30353">
    <property type="entry name" value="INNER MEMBRANE PROTEIN DEDA-RELATED"/>
    <property type="match status" value="1"/>
</dbReference>
<dbReference type="PANTHER" id="PTHR30353:SF0">
    <property type="entry name" value="TRANSMEMBRANE PROTEIN"/>
    <property type="match status" value="1"/>
</dbReference>
<dbReference type="Pfam" id="PF09335">
    <property type="entry name" value="VTT_dom"/>
    <property type="match status" value="1"/>
</dbReference>
<sequence length="227" mass="24489">MSTAVTAMPDILDPMYWLGANGVFGSAVLPGILIIVFIETGLLFPLLPGESLLFTGGLLSASPAPPVTIGVLAPCVALVAVLGDQTAYFIGRRIGPALFKKEDSRFFKKHYVTESHAFFEKYGKWTIILARFVPIARTFVPVIAGVSYMRYPVFLGFDIVGGVAWGAGVTLAGYFLGSVPFVHMNFQLIILAIVFVSLLPALVSAARVYRARRNAPQSDPDPLVLPE</sequence>
<name>Y364_MYCTU</name>
<accession>P9WP09</accession>
<accession>L0T555</accession>
<accession>O06314</accession>
<proteinExistence type="evidence at protein level"/>
<reference key="1">
    <citation type="journal article" date="1998" name="Nature">
        <title>Deciphering the biology of Mycobacterium tuberculosis from the complete genome sequence.</title>
        <authorList>
            <person name="Cole S.T."/>
            <person name="Brosch R."/>
            <person name="Parkhill J."/>
            <person name="Garnier T."/>
            <person name="Churcher C.M."/>
            <person name="Harris D.E."/>
            <person name="Gordon S.V."/>
            <person name="Eiglmeier K."/>
            <person name="Gas S."/>
            <person name="Barry C.E. III"/>
            <person name="Tekaia F."/>
            <person name="Badcock K."/>
            <person name="Basham D."/>
            <person name="Brown D."/>
            <person name="Chillingworth T."/>
            <person name="Connor R."/>
            <person name="Davies R.M."/>
            <person name="Devlin K."/>
            <person name="Feltwell T."/>
            <person name="Gentles S."/>
            <person name="Hamlin N."/>
            <person name="Holroyd S."/>
            <person name="Hornsby T."/>
            <person name="Jagels K."/>
            <person name="Krogh A."/>
            <person name="McLean J."/>
            <person name="Moule S."/>
            <person name="Murphy L.D."/>
            <person name="Oliver S."/>
            <person name="Osborne J."/>
            <person name="Quail M.A."/>
            <person name="Rajandream M.A."/>
            <person name="Rogers J."/>
            <person name="Rutter S."/>
            <person name="Seeger K."/>
            <person name="Skelton S."/>
            <person name="Squares S."/>
            <person name="Squares R."/>
            <person name="Sulston J.E."/>
            <person name="Taylor K."/>
            <person name="Whitehead S."/>
            <person name="Barrell B.G."/>
        </authorList>
    </citation>
    <scope>NUCLEOTIDE SEQUENCE [LARGE SCALE GENOMIC DNA]</scope>
    <source>
        <strain>ATCC 25618 / H37Rv</strain>
    </source>
</reference>
<reference key="2">
    <citation type="journal article" date="2011" name="Mol. Cell. Proteomics">
        <title>Proteogenomic analysis of Mycobacterium tuberculosis by high resolution mass spectrometry.</title>
        <authorList>
            <person name="Kelkar D.S."/>
            <person name="Kumar D."/>
            <person name="Kumar P."/>
            <person name="Balakrishnan L."/>
            <person name="Muthusamy B."/>
            <person name="Yadav A.K."/>
            <person name="Shrivastava P."/>
            <person name="Marimuthu A."/>
            <person name="Anand S."/>
            <person name="Sundaram H."/>
            <person name="Kingsbury R."/>
            <person name="Harsha H.C."/>
            <person name="Nair B."/>
            <person name="Prasad T.S."/>
            <person name="Chauhan D.S."/>
            <person name="Katoch K."/>
            <person name="Katoch V.M."/>
            <person name="Kumar P."/>
            <person name="Chaerkady R."/>
            <person name="Ramachandran S."/>
            <person name="Dash D."/>
            <person name="Pandey A."/>
        </authorList>
    </citation>
    <scope>IDENTIFICATION BY MASS SPECTROMETRY [LARGE SCALE ANALYSIS]</scope>
    <source>
        <strain>ATCC 25618 / H37Rv</strain>
    </source>
</reference>
<organism>
    <name type="scientific">Mycobacterium tuberculosis (strain ATCC 25618 / H37Rv)</name>
    <dbReference type="NCBI Taxonomy" id="83332"/>
    <lineage>
        <taxon>Bacteria</taxon>
        <taxon>Bacillati</taxon>
        <taxon>Actinomycetota</taxon>
        <taxon>Actinomycetes</taxon>
        <taxon>Mycobacteriales</taxon>
        <taxon>Mycobacteriaceae</taxon>
        <taxon>Mycobacterium</taxon>
        <taxon>Mycobacterium tuberculosis complex</taxon>
    </lineage>
</organism>
<keyword id="KW-1003">Cell membrane</keyword>
<keyword id="KW-0472">Membrane</keyword>
<keyword id="KW-1185">Reference proteome</keyword>
<keyword id="KW-0812">Transmembrane</keyword>
<keyword id="KW-1133">Transmembrane helix</keyword>
<feature type="chain" id="PRO_0000161428" description="Uncharacterized membrane protein Rv0364">
    <location>
        <begin position="1"/>
        <end position="227"/>
    </location>
</feature>
<feature type="transmembrane region" description="Helical" evidence="1">
    <location>
        <begin position="27"/>
        <end position="47"/>
    </location>
</feature>
<feature type="transmembrane region" description="Helical" evidence="1">
    <location>
        <begin position="63"/>
        <end position="83"/>
    </location>
</feature>
<feature type="transmembrane region" description="Helical" evidence="1">
    <location>
        <begin position="126"/>
        <end position="146"/>
    </location>
</feature>
<feature type="transmembrane region" description="Helical" evidence="1">
    <location>
        <begin position="153"/>
        <end position="173"/>
    </location>
</feature>
<feature type="transmembrane region" description="Helical" evidence="1">
    <location>
        <begin position="186"/>
        <end position="206"/>
    </location>
</feature>
<gene>
    <name type="ordered locus">Rv0364</name>
    <name type="ORF">MTCY13E10.26</name>
</gene>
<evidence type="ECO:0000255" key="1"/>
<evidence type="ECO:0000305" key="2"/>
<protein>
    <recommendedName>
        <fullName>Uncharacterized membrane protein Rv0364</fullName>
    </recommendedName>
</protein>